<dbReference type="EC" id="6.3.5.7" evidence="1"/>
<dbReference type="EMBL" id="AE016853">
    <property type="protein sequence ID" value="AAO57923.1"/>
    <property type="molecule type" value="Genomic_DNA"/>
</dbReference>
<dbReference type="RefSeq" id="NP_794228.1">
    <property type="nucleotide sequence ID" value="NC_004578.1"/>
</dbReference>
<dbReference type="RefSeq" id="WP_005766477.1">
    <property type="nucleotide sequence ID" value="NC_004578.1"/>
</dbReference>
<dbReference type="SMR" id="Q87WR9"/>
<dbReference type="STRING" id="223283.PSPTO_4474"/>
<dbReference type="GeneID" id="1186155"/>
<dbReference type="KEGG" id="pst:PSPTO_4474"/>
<dbReference type="PATRIC" id="fig|223283.9.peg.4589"/>
<dbReference type="eggNOG" id="COG0154">
    <property type="taxonomic scope" value="Bacteria"/>
</dbReference>
<dbReference type="HOGENOM" id="CLU_009600_0_3_6"/>
<dbReference type="OrthoDB" id="9811471at2"/>
<dbReference type="PhylomeDB" id="Q87WR9"/>
<dbReference type="Proteomes" id="UP000002515">
    <property type="component" value="Chromosome"/>
</dbReference>
<dbReference type="GO" id="GO:0030956">
    <property type="term" value="C:glutamyl-tRNA(Gln) amidotransferase complex"/>
    <property type="evidence" value="ECO:0007669"/>
    <property type="project" value="InterPro"/>
</dbReference>
<dbReference type="GO" id="GO:0005524">
    <property type="term" value="F:ATP binding"/>
    <property type="evidence" value="ECO:0007669"/>
    <property type="project" value="UniProtKB-KW"/>
</dbReference>
<dbReference type="GO" id="GO:0050567">
    <property type="term" value="F:glutaminyl-tRNA synthase (glutamine-hydrolyzing) activity"/>
    <property type="evidence" value="ECO:0007669"/>
    <property type="project" value="UniProtKB-UniRule"/>
</dbReference>
<dbReference type="GO" id="GO:0006412">
    <property type="term" value="P:translation"/>
    <property type="evidence" value="ECO:0007669"/>
    <property type="project" value="UniProtKB-UniRule"/>
</dbReference>
<dbReference type="Gene3D" id="3.90.1300.10">
    <property type="entry name" value="Amidase signature (AS) domain"/>
    <property type="match status" value="1"/>
</dbReference>
<dbReference type="HAMAP" id="MF_00120">
    <property type="entry name" value="GatA"/>
    <property type="match status" value="1"/>
</dbReference>
<dbReference type="InterPro" id="IPR000120">
    <property type="entry name" value="Amidase"/>
</dbReference>
<dbReference type="InterPro" id="IPR020556">
    <property type="entry name" value="Amidase_CS"/>
</dbReference>
<dbReference type="InterPro" id="IPR023631">
    <property type="entry name" value="Amidase_dom"/>
</dbReference>
<dbReference type="InterPro" id="IPR036928">
    <property type="entry name" value="AS_sf"/>
</dbReference>
<dbReference type="InterPro" id="IPR004412">
    <property type="entry name" value="GatA"/>
</dbReference>
<dbReference type="NCBIfam" id="TIGR00132">
    <property type="entry name" value="gatA"/>
    <property type="match status" value="1"/>
</dbReference>
<dbReference type="PANTHER" id="PTHR11895:SF151">
    <property type="entry name" value="GLUTAMYL-TRNA(GLN) AMIDOTRANSFERASE SUBUNIT A"/>
    <property type="match status" value="1"/>
</dbReference>
<dbReference type="PANTHER" id="PTHR11895">
    <property type="entry name" value="TRANSAMIDASE"/>
    <property type="match status" value="1"/>
</dbReference>
<dbReference type="Pfam" id="PF01425">
    <property type="entry name" value="Amidase"/>
    <property type="match status" value="1"/>
</dbReference>
<dbReference type="SUPFAM" id="SSF75304">
    <property type="entry name" value="Amidase signature (AS) enzymes"/>
    <property type="match status" value="1"/>
</dbReference>
<dbReference type="PROSITE" id="PS00571">
    <property type="entry name" value="AMIDASES"/>
    <property type="match status" value="1"/>
</dbReference>
<keyword id="KW-0067">ATP-binding</keyword>
<keyword id="KW-0436">Ligase</keyword>
<keyword id="KW-0547">Nucleotide-binding</keyword>
<keyword id="KW-0648">Protein biosynthesis</keyword>
<keyword id="KW-1185">Reference proteome</keyword>
<gene>
    <name evidence="1" type="primary">gatA</name>
    <name type="ordered locus">PSPTO_4474</name>
</gene>
<protein>
    <recommendedName>
        <fullName evidence="1">Glutamyl-tRNA(Gln) amidotransferase subunit A</fullName>
        <shortName evidence="1">Glu-ADT subunit A</shortName>
        <ecNumber evidence="1">6.3.5.7</ecNumber>
    </recommendedName>
</protein>
<name>GATA_PSESM</name>
<feature type="chain" id="PRO_0000105191" description="Glutamyl-tRNA(Gln) amidotransferase subunit A">
    <location>
        <begin position="1"/>
        <end position="483"/>
    </location>
</feature>
<feature type="active site" description="Charge relay system" evidence="1">
    <location>
        <position position="76"/>
    </location>
</feature>
<feature type="active site" description="Charge relay system" evidence="1">
    <location>
        <position position="151"/>
    </location>
</feature>
<feature type="active site" description="Acyl-ester intermediate" evidence="1">
    <location>
        <position position="175"/>
    </location>
</feature>
<organism>
    <name type="scientific">Pseudomonas syringae pv. tomato (strain ATCC BAA-871 / DC3000)</name>
    <dbReference type="NCBI Taxonomy" id="223283"/>
    <lineage>
        <taxon>Bacteria</taxon>
        <taxon>Pseudomonadati</taxon>
        <taxon>Pseudomonadota</taxon>
        <taxon>Gammaproteobacteria</taxon>
        <taxon>Pseudomonadales</taxon>
        <taxon>Pseudomonadaceae</taxon>
        <taxon>Pseudomonas</taxon>
    </lineage>
</organism>
<comment type="function">
    <text evidence="1">Allows the formation of correctly charged Gln-tRNA(Gln) through the transamidation of misacylated Glu-tRNA(Gln) in organisms which lack glutaminyl-tRNA synthetase. The reaction takes place in the presence of glutamine and ATP through an activated gamma-phospho-Glu-tRNA(Gln).</text>
</comment>
<comment type="catalytic activity">
    <reaction evidence="1">
        <text>L-glutamyl-tRNA(Gln) + L-glutamine + ATP + H2O = L-glutaminyl-tRNA(Gln) + L-glutamate + ADP + phosphate + H(+)</text>
        <dbReference type="Rhea" id="RHEA:17521"/>
        <dbReference type="Rhea" id="RHEA-COMP:9681"/>
        <dbReference type="Rhea" id="RHEA-COMP:9684"/>
        <dbReference type="ChEBI" id="CHEBI:15377"/>
        <dbReference type="ChEBI" id="CHEBI:15378"/>
        <dbReference type="ChEBI" id="CHEBI:29985"/>
        <dbReference type="ChEBI" id="CHEBI:30616"/>
        <dbReference type="ChEBI" id="CHEBI:43474"/>
        <dbReference type="ChEBI" id="CHEBI:58359"/>
        <dbReference type="ChEBI" id="CHEBI:78520"/>
        <dbReference type="ChEBI" id="CHEBI:78521"/>
        <dbReference type="ChEBI" id="CHEBI:456216"/>
        <dbReference type="EC" id="6.3.5.7"/>
    </reaction>
</comment>
<comment type="subunit">
    <text evidence="1">Heterotrimer of A, B and C subunits.</text>
</comment>
<comment type="similarity">
    <text evidence="1">Belongs to the amidase family. GatA subfamily.</text>
</comment>
<sequence>MHQMTLAEIARGLAEKKFSSEELTRVLLSRIAQLDPQLNSFISLTEDLAITQAQAADARRAAGENGPLLGAPLAHKDLFCTQGIRTSCGSRMLDNFKAPYDATVVSKLASAGTVTLGKTNMDEFAMGSANESSHYGAVKNPWNLECVPGGSSGGSAAAVAARLLPAATGTDTGGSIRQPAALTNLTGLKPTYGRVSRWGMIAYASSLDQAGPMARTAEDCALLLQGMAGFDPQDSTSIDEPVPDYSASLNTSLKGLRIGVPKEYFSAGLDPRIAQLVHESVKELEKLGAIVKQVSLPNLQHAIPAYYVIAPAEASSNLSRFDGVRFGYRCEDPKDLTDLYKRSRAEGFGPEVQRRIMVGAYALSAGYYDAYYLQAQKIRRLIKNDFMSAFAEVDVILGPTTPNPAWKIGAKTHDPIAQYLEDFYTITANLAGLPGLSMPAGFVDGLPVGVQLLAPYFQEGRLLNVAHQYQQVTDWHTRAPEGF</sequence>
<evidence type="ECO:0000255" key="1">
    <source>
        <dbReference type="HAMAP-Rule" id="MF_00120"/>
    </source>
</evidence>
<reference key="1">
    <citation type="journal article" date="2003" name="Proc. Natl. Acad. Sci. U.S.A.">
        <title>The complete genome sequence of the Arabidopsis and tomato pathogen Pseudomonas syringae pv. tomato DC3000.</title>
        <authorList>
            <person name="Buell C.R."/>
            <person name="Joardar V."/>
            <person name="Lindeberg M."/>
            <person name="Selengut J."/>
            <person name="Paulsen I.T."/>
            <person name="Gwinn M.L."/>
            <person name="Dodson R.J."/>
            <person name="DeBoy R.T."/>
            <person name="Durkin A.S."/>
            <person name="Kolonay J.F."/>
            <person name="Madupu R."/>
            <person name="Daugherty S.C."/>
            <person name="Brinkac L.M."/>
            <person name="Beanan M.J."/>
            <person name="Haft D.H."/>
            <person name="Nelson W.C."/>
            <person name="Davidsen T.M."/>
            <person name="Zafar N."/>
            <person name="Zhou L."/>
            <person name="Liu J."/>
            <person name="Yuan Q."/>
            <person name="Khouri H.M."/>
            <person name="Fedorova N.B."/>
            <person name="Tran B."/>
            <person name="Russell D."/>
            <person name="Berry K.J."/>
            <person name="Utterback T.R."/>
            <person name="Van Aken S.E."/>
            <person name="Feldblyum T.V."/>
            <person name="D'Ascenzo M."/>
            <person name="Deng W.-L."/>
            <person name="Ramos A.R."/>
            <person name="Alfano J.R."/>
            <person name="Cartinhour S."/>
            <person name="Chatterjee A.K."/>
            <person name="Delaney T.P."/>
            <person name="Lazarowitz S.G."/>
            <person name="Martin G.B."/>
            <person name="Schneider D.J."/>
            <person name="Tang X."/>
            <person name="Bender C.L."/>
            <person name="White O."/>
            <person name="Fraser C.M."/>
            <person name="Collmer A."/>
        </authorList>
    </citation>
    <scope>NUCLEOTIDE SEQUENCE [LARGE SCALE GENOMIC DNA]</scope>
    <source>
        <strain>ATCC BAA-871 / DC3000</strain>
    </source>
</reference>
<proteinExistence type="inferred from homology"/>
<accession>Q87WR9</accession>